<keyword id="KW-0028">Amino-acid biosynthesis</keyword>
<keyword id="KW-0368">Histidine biosynthesis</keyword>
<keyword id="KW-0479">Metal-binding</keyword>
<keyword id="KW-0520">NAD</keyword>
<keyword id="KW-0560">Oxidoreductase</keyword>
<keyword id="KW-1185">Reference proteome</keyword>
<keyword id="KW-0862">Zinc</keyword>
<reference key="1">
    <citation type="journal article" date="2005" name="Infect. Immun.">
        <title>Whole-genome analyses of speciation events in pathogenic Brucellae.</title>
        <authorList>
            <person name="Chain P.S."/>
            <person name="Comerci D.J."/>
            <person name="Tolmasky M.E."/>
            <person name="Larimer F.W."/>
            <person name="Malfatti S.A."/>
            <person name="Vergez L.M."/>
            <person name="Aguero F."/>
            <person name="Land M.L."/>
            <person name="Ugalde R.A."/>
            <person name="Garcia E."/>
        </authorList>
    </citation>
    <scope>NUCLEOTIDE SEQUENCE [LARGE SCALE GENOMIC DNA]</scope>
    <source>
        <strain>2308</strain>
    </source>
</reference>
<sequence length="430" mass="46102">MVTTLRQTDPDFEQKFAAFLSGKREVSEDVDRAVREIVDRVRREGDSALLDYSRRFDRIDLEKTGIAVTEAEIDAAFDAAPASTVEALKLARDRIEKHHARQLPKDDRYTDALGVELGSRWTAIEAVGLYVPGGTASYPSSVLMNAMPAKVAGVDRIVMVVPAPDGNLNPLVLVAARLAGVSEIYRVGGAQAIAALAYGTETIRPVAKIVGPGNAYVAAAKRIVFGTVGIDMIAGPSEVLIVADKDNNPDWIAADLLAQAEHDMAAQSILMTNDEAFAHAVEEAVERQLHTLARTETASASWRDFGAVILVKDFEDAIPLANRIAAEHLEIAVADAEAFVPRIRNAGSIFIGGYTPEVIGDYVGGCNHVLPTARSARFSSGLSVLDYMKRTSLLKLGSEQLRALGPAAIEIARAEGLDAHAQSVAIRLNL</sequence>
<protein>
    <recommendedName>
        <fullName evidence="1">Histidinol dehydrogenase</fullName>
        <shortName evidence="1">HDH</shortName>
        <ecNumber evidence="1">1.1.1.23</ecNumber>
    </recommendedName>
</protein>
<accession>Q2YPB8</accession>
<feature type="chain" id="PRO_0000229851" description="Histidinol dehydrogenase">
    <location>
        <begin position="1"/>
        <end position="430"/>
    </location>
</feature>
<feature type="active site" description="Proton acceptor" evidence="1">
    <location>
        <position position="327"/>
    </location>
</feature>
<feature type="active site" description="Proton acceptor" evidence="1">
    <location>
        <position position="328"/>
    </location>
</feature>
<feature type="binding site" evidence="1">
    <location>
        <position position="130"/>
    </location>
    <ligand>
        <name>NAD(+)</name>
        <dbReference type="ChEBI" id="CHEBI:57540"/>
    </ligand>
</feature>
<feature type="binding site" evidence="1">
    <location>
        <position position="191"/>
    </location>
    <ligand>
        <name>NAD(+)</name>
        <dbReference type="ChEBI" id="CHEBI:57540"/>
    </ligand>
</feature>
<feature type="binding site" evidence="1">
    <location>
        <position position="214"/>
    </location>
    <ligand>
        <name>NAD(+)</name>
        <dbReference type="ChEBI" id="CHEBI:57540"/>
    </ligand>
</feature>
<feature type="binding site" evidence="1">
    <location>
        <position position="237"/>
    </location>
    <ligand>
        <name>substrate</name>
    </ligand>
</feature>
<feature type="binding site" evidence="1">
    <location>
        <position position="259"/>
    </location>
    <ligand>
        <name>substrate</name>
    </ligand>
</feature>
<feature type="binding site" evidence="1">
    <location>
        <position position="259"/>
    </location>
    <ligand>
        <name>Zn(2+)</name>
        <dbReference type="ChEBI" id="CHEBI:29105"/>
    </ligand>
</feature>
<feature type="binding site" evidence="1">
    <location>
        <position position="262"/>
    </location>
    <ligand>
        <name>substrate</name>
    </ligand>
</feature>
<feature type="binding site" evidence="1">
    <location>
        <position position="262"/>
    </location>
    <ligand>
        <name>Zn(2+)</name>
        <dbReference type="ChEBI" id="CHEBI:29105"/>
    </ligand>
</feature>
<feature type="binding site" evidence="1">
    <location>
        <position position="328"/>
    </location>
    <ligand>
        <name>substrate</name>
    </ligand>
</feature>
<feature type="binding site" evidence="1">
    <location>
        <position position="361"/>
    </location>
    <ligand>
        <name>substrate</name>
    </ligand>
</feature>
<feature type="binding site" evidence="1">
    <location>
        <position position="361"/>
    </location>
    <ligand>
        <name>Zn(2+)</name>
        <dbReference type="ChEBI" id="CHEBI:29105"/>
    </ligand>
</feature>
<feature type="binding site" evidence="1">
    <location>
        <position position="415"/>
    </location>
    <ligand>
        <name>substrate</name>
    </ligand>
</feature>
<feature type="binding site" evidence="1">
    <location>
        <position position="420"/>
    </location>
    <ligand>
        <name>substrate</name>
    </ligand>
</feature>
<feature type="binding site" evidence="1">
    <location>
        <position position="420"/>
    </location>
    <ligand>
        <name>Zn(2+)</name>
        <dbReference type="ChEBI" id="CHEBI:29105"/>
    </ligand>
</feature>
<name>HISX_BRUA2</name>
<organism>
    <name type="scientific">Brucella abortus (strain 2308)</name>
    <dbReference type="NCBI Taxonomy" id="359391"/>
    <lineage>
        <taxon>Bacteria</taxon>
        <taxon>Pseudomonadati</taxon>
        <taxon>Pseudomonadota</taxon>
        <taxon>Alphaproteobacteria</taxon>
        <taxon>Hyphomicrobiales</taxon>
        <taxon>Brucellaceae</taxon>
        <taxon>Brucella/Ochrobactrum group</taxon>
        <taxon>Brucella</taxon>
    </lineage>
</organism>
<proteinExistence type="inferred from homology"/>
<comment type="function">
    <text evidence="1">Catalyzes the sequential NAD-dependent oxidations of L-histidinol to L-histidinaldehyde and then to L-histidine.</text>
</comment>
<comment type="catalytic activity">
    <reaction evidence="1">
        <text>L-histidinol + 2 NAD(+) + H2O = L-histidine + 2 NADH + 3 H(+)</text>
        <dbReference type="Rhea" id="RHEA:20641"/>
        <dbReference type="ChEBI" id="CHEBI:15377"/>
        <dbReference type="ChEBI" id="CHEBI:15378"/>
        <dbReference type="ChEBI" id="CHEBI:57540"/>
        <dbReference type="ChEBI" id="CHEBI:57595"/>
        <dbReference type="ChEBI" id="CHEBI:57699"/>
        <dbReference type="ChEBI" id="CHEBI:57945"/>
        <dbReference type="EC" id="1.1.1.23"/>
    </reaction>
</comment>
<comment type="cofactor">
    <cofactor evidence="1">
        <name>Zn(2+)</name>
        <dbReference type="ChEBI" id="CHEBI:29105"/>
    </cofactor>
    <text evidence="1">Binds 1 zinc ion per subunit.</text>
</comment>
<comment type="pathway">
    <text evidence="1">Amino-acid biosynthesis; L-histidine biosynthesis; L-histidine from 5-phospho-alpha-D-ribose 1-diphosphate: step 9/9.</text>
</comment>
<comment type="similarity">
    <text evidence="1">Belongs to the histidinol dehydrogenase family.</text>
</comment>
<dbReference type="EC" id="1.1.1.23" evidence="1"/>
<dbReference type="EMBL" id="AM040264">
    <property type="protein sequence ID" value="CAJ10241.1"/>
    <property type="molecule type" value="Genomic_DNA"/>
</dbReference>
<dbReference type="RefSeq" id="WP_002965534.1">
    <property type="nucleotide sequence ID" value="NZ_KN046823.1"/>
</dbReference>
<dbReference type="SMR" id="Q2YPB8"/>
<dbReference type="STRING" id="359391.BAB1_0285"/>
<dbReference type="GeneID" id="93017270"/>
<dbReference type="KEGG" id="bmf:BAB1_0285"/>
<dbReference type="PATRIC" id="fig|359391.11.peg.1704"/>
<dbReference type="HOGENOM" id="CLU_006732_3_3_5"/>
<dbReference type="PhylomeDB" id="Q2YPB8"/>
<dbReference type="UniPathway" id="UPA00031">
    <property type="reaction ID" value="UER00014"/>
</dbReference>
<dbReference type="PRO" id="PR:Q2YPB8"/>
<dbReference type="Proteomes" id="UP000002719">
    <property type="component" value="Chromosome I"/>
</dbReference>
<dbReference type="GO" id="GO:0005829">
    <property type="term" value="C:cytosol"/>
    <property type="evidence" value="ECO:0007669"/>
    <property type="project" value="TreeGrafter"/>
</dbReference>
<dbReference type="GO" id="GO:0004399">
    <property type="term" value="F:histidinol dehydrogenase activity"/>
    <property type="evidence" value="ECO:0007669"/>
    <property type="project" value="UniProtKB-UniRule"/>
</dbReference>
<dbReference type="GO" id="GO:0051287">
    <property type="term" value="F:NAD binding"/>
    <property type="evidence" value="ECO:0007669"/>
    <property type="project" value="InterPro"/>
</dbReference>
<dbReference type="GO" id="GO:0008270">
    <property type="term" value="F:zinc ion binding"/>
    <property type="evidence" value="ECO:0007669"/>
    <property type="project" value="UniProtKB-UniRule"/>
</dbReference>
<dbReference type="GO" id="GO:0000105">
    <property type="term" value="P:L-histidine biosynthetic process"/>
    <property type="evidence" value="ECO:0007669"/>
    <property type="project" value="UniProtKB-UniRule"/>
</dbReference>
<dbReference type="CDD" id="cd06572">
    <property type="entry name" value="Histidinol_dh"/>
    <property type="match status" value="1"/>
</dbReference>
<dbReference type="FunFam" id="3.40.50.1980:FF:000001">
    <property type="entry name" value="Histidinol dehydrogenase"/>
    <property type="match status" value="1"/>
</dbReference>
<dbReference type="FunFam" id="3.40.50.1980:FF:000026">
    <property type="entry name" value="Histidinol dehydrogenase"/>
    <property type="match status" value="1"/>
</dbReference>
<dbReference type="FunFam" id="1.20.5.1300:FF:000002">
    <property type="entry name" value="Histidinol dehydrogenase, chloroplastic"/>
    <property type="match status" value="1"/>
</dbReference>
<dbReference type="Gene3D" id="1.20.5.1300">
    <property type="match status" value="1"/>
</dbReference>
<dbReference type="Gene3D" id="3.40.50.1980">
    <property type="entry name" value="Nitrogenase molybdenum iron protein domain"/>
    <property type="match status" value="2"/>
</dbReference>
<dbReference type="HAMAP" id="MF_01024">
    <property type="entry name" value="HisD"/>
    <property type="match status" value="1"/>
</dbReference>
<dbReference type="InterPro" id="IPR016161">
    <property type="entry name" value="Ald_DH/histidinol_DH"/>
</dbReference>
<dbReference type="InterPro" id="IPR001692">
    <property type="entry name" value="Histidinol_DH_CS"/>
</dbReference>
<dbReference type="InterPro" id="IPR022695">
    <property type="entry name" value="Histidinol_DH_monofunct"/>
</dbReference>
<dbReference type="InterPro" id="IPR012131">
    <property type="entry name" value="Hstdl_DH"/>
</dbReference>
<dbReference type="NCBIfam" id="TIGR00069">
    <property type="entry name" value="hisD"/>
    <property type="match status" value="1"/>
</dbReference>
<dbReference type="PANTHER" id="PTHR21256:SF2">
    <property type="entry name" value="HISTIDINE BIOSYNTHESIS TRIFUNCTIONAL PROTEIN"/>
    <property type="match status" value="1"/>
</dbReference>
<dbReference type="PANTHER" id="PTHR21256">
    <property type="entry name" value="HISTIDINOL DEHYDROGENASE HDH"/>
    <property type="match status" value="1"/>
</dbReference>
<dbReference type="Pfam" id="PF00815">
    <property type="entry name" value="Histidinol_dh"/>
    <property type="match status" value="1"/>
</dbReference>
<dbReference type="PIRSF" id="PIRSF000099">
    <property type="entry name" value="Histidinol_dh"/>
    <property type="match status" value="1"/>
</dbReference>
<dbReference type="PRINTS" id="PR00083">
    <property type="entry name" value="HOLDHDRGNASE"/>
</dbReference>
<dbReference type="SUPFAM" id="SSF53720">
    <property type="entry name" value="ALDH-like"/>
    <property type="match status" value="1"/>
</dbReference>
<dbReference type="PROSITE" id="PS00611">
    <property type="entry name" value="HISOL_DEHYDROGENASE"/>
    <property type="match status" value="1"/>
</dbReference>
<gene>
    <name evidence="1" type="primary">hisD</name>
    <name type="ordered locus">BAB1_0285</name>
</gene>
<evidence type="ECO:0000255" key="1">
    <source>
        <dbReference type="HAMAP-Rule" id="MF_01024"/>
    </source>
</evidence>